<gene>
    <name evidence="1" type="primary">phnC1</name>
    <name type="ordered locus">RPA0700</name>
</gene>
<comment type="function">
    <text evidence="1">Part of the ABC transporter complex PhnCDE involved in phosphonates import. Responsible for energy coupling to the transport system.</text>
</comment>
<comment type="catalytic activity">
    <reaction evidence="1">
        <text>phosphonate(out) + ATP + H2O = phosphonate(in) + ADP + phosphate + H(+)</text>
        <dbReference type="Rhea" id="RHEA:18065"/>
        <dbReference type="ChEBI" id="CHEBI:15377"/>
        <dbReference type="ChEBI" id="CHEBI:15378"/>
        <dbReference type="ChEBI" id="CHEBI:16215"/>
        <dbReference type="ChEBI" id="CHEBI:30616"/>
        <dbReference type="ChEBI" id="CHEBI:43474"/>
        <dbReference type="ChEBI" id="CHEBI:456216"/>
        <dbReference type="EC" id="7.3.2.2"/>
    </reaction>
</comment>
<comment type="subunit">
    <text evidence="1">The complex is composed of two ATP-binding proteins (PhnC), two transmembrane proteins (PhnE) and a solute-binding protein (PhnD).</text>
</comment>
<comment type="subcellular location">
    <subcellularLocation>
        <location evidence="1">Cell inner membrane</location>
        <topology evidence="1">Peripheral membrane protein</topology>
    </subcellularLocation>
</comment>
<comment type="similarity">
    <text evidence="1">Belongs to the ABC transporter superfamily. Phosphonates importer (TC 3.A.1.9.1) family.</text>
</comment>
<sequence length="270" mass="29235">MLVVEGLTCRFGSKAAVDGASFSVERGSFVGVIGRSGAGKSTLLRMLNRLAEPSEGRILFEGIDVTALQGRELRQWRARSAMIFQQFNLIGRLDVLTNVLMGRLSEVPSWRSLVQMWPEQDRALAISALDQFDMASYAAQRADQLSGGQQQRVAIARALVQQPDIVLADEPIASLDPRNTKIVMDALLRINKHFGITVLCNLHSLDLARSYCDRLIGMASGRVVFDGAPAALTDQIARELYDLEADEVLGTASHVPHGLPAPALAGVAVA</sequence>
<name>PHNC1_RHOPA</name>
<feature type="chain" id="PRO_0000092726" description="Phosphonates import ATP-binding protein PhnC 1">
    <location>
        <begin position="1"/>
        <end position="270"/>
    </location>
</feature>
<feature type="domain" description="ABC transporter" evidence="1">
    <location>
        <begin position="2"/>
        <end position="245"/>
    </location>
</feature>
<feature type="binding site" evidence="1">
    <location>
        <begin position="34"/>
        <end position="41"/>
    </location>
    <ligand>
        <name>ATP</name>
        <dbReference type="ChEBI" id="CHEBI:30616"/>
    </ligand>
</feature>
<keyword id="KW-0067">ATP-binding</keyword>
<keyword id="KW-0997">Cell inner membrane</keyword>
<keyword id="KW-1003">Cell membrane</keyword>
<keyword id="KW-0472">Membrane</keyword>
<keyword id="KW-0547">Nucleotide-binding</keyword>
<keyword id="KW-0918">Phosphonate transport</keyword>
<keyword id="KW-1278">Translocase</keyword>
<keyword id="KW-0813">Transport</keyword>
<organism>
    <name type="scientific">Rhodopseudomonas palustris (strain ATCC BAA-98 / CGA009)</name>
    <dbReference type="NCBI Taxonomy" id="258594"/>
    <lineage>
        <taxon>Bacteria</taxon>
        <taxon>Pseudomonadati</taxon>
        <taxon>Pseudomonadota</taxon>
        <taxon>Alphaproteobacteria</taxon>
        <taxon>Hyphomicrobiales</taxon>
        <taxon>Nitrobacteraceae</taxon>
        <taxon>Rhodopseudomonas</taxon>
    </lineage>
</organism>
<reference key="1">
    <citation type="journal article" date="2004" name="Nat. Biotechnol.">
        <title>Complete genome sequence of the metabolically versatile photosynthetic bacterium Rhodopseudomonas palustris.</title>
        <authorList>
            <person name="Larimer F.W."/>
            <person name="Chain P."/>
            <person name="Hauser L."/>
            <person name="Lamerdin J.E."/>
            <person name="Malfatti S."/>
            <person name="Do L."/>
            <person name="Land M.L."/>
            <person name="Pelletier D.A."/>
            <person name="Beatty J.T."/>
            <person name="Lang A.S."/>
            <person name="Tabita F.R."/>
            <person name="Gibson J.L."/>
            <person name="Hanson T.E."/>
            <person name="Bobst C."/>
            <person name="Torres y Torres J.L."/>
            <person name="Peres C."/>
            <person name="Harrison F.H."/>
            <person name="Gibson J."/>
            <person name="Harwood C.S."/>
        </authorList>
    </citation>
    <scope>NUCLEOTIDE SEQUENCE [LARGE SCALE GENOMIC DNA]</scope>
    <source>
        <strain>ATCC BAA-98 / CGA009</strain>
    </source>
</reference>
<evidence type="ECO:0000255" key="1">
    <source>
        <dbReference type="HAMAP-Rule" id="MF_01713"/>
    </source>
</evidence>
<dbReference type="EC" id="7.3.2.2" evidence="1"/>
<dbReference type="EMBL" id="BX572595">
    <property type="protein sequence ID" value="CAE26144.1"/>
    <property type="molecule type" value="Genomic_DNA"/>
</dbReference>
<dbReference type="RefSeq" id="WP_011156267.1">
    <property type="nucleotide sequence ID" value="NZ_CP116810.1"/>
</dbReference>
<dbReference type="SMR" id="Q6NBX6"/>
<dbReference type="STRING" id="258594.RPA0700"/>
<dbReference type="GeneID" id="66891715"/>
<dbReference type="eggNOG" id="COG3638">
    <property type="taxonomic scope" value="Bacteria"/>
</dbReference>
<dbReference type="HOGENOM" id="CLU_000604_1_22_5"/>
<dbReference type="PhylomeDB" id="Q6NBX6"/>
<dbReference type="GO" id="GO:0005886">
    <property type="term" value="C:plasma membrane"/>
    <property type="evidence" value="ECO:0007669"/>
    <property type="project" value="UniProtKB-SubCell"/>
</dbReference>
<dbReference type="GO" id="GO:0015416">
    <property type="term" value="F:ABC-type phosphonate transporter activity"/>
    <property type="evidence" value="ECO:0007669"/>
    <property type="project" value="UniProtKB-EC"/>
</dbReference>
<dbReference type="GO" id="GO:0005524">
    <property type="term" value="F:ATP binding"/>
    <property type="evidence" value="ECO:0007669"/>
    <property type="project" value="UniProtKB-KW"/>
</dbReference>
<dbReference type="GO" id="GO:0016887">
    <property type="term" value="F:ATP hydrolysis activity"/>
    <property type="evidence" value="ECO:0007669"/>
    <property type="project" value="InterPro"/>
</dbReference>
<dbReference type="CDD" id="cd03256">
    <property type="entry name" value="ABC_PhnC_transporter"/>
    <property type="match status" value="1"/>
</dbReference>
<dbReference type="Gene3D" id="3.40.50.300">
    <property type="entry name" value="P-loop containing nucleotide triphosphate hydrolases"/>
    <property type="match status" value="1"/>
</dbReference>
<dbReference type="InterPro" id="IPR003593">
    <property type="entry name" value="AAA+_ATPase"/>
</dbReference>
<dbReference type="InterPro" id="IPR003439">
    <property type="entry name" value="ABC_transporter-like_ATP-bd"/>
</dbReference>
<dbReference type="InterPro" id="IPR017871">
    <property type="entry name" value="ABC_transporter-like_CS"/>
</dbReference>
<dbReference type="InterPro" id="IPR012693">
    <property type="entry name" value="ABC_transpr_PhnC"/>
</dbReference>
<dbReference type="InterPro" id="IPR050086">
    <property type="entry name" value="MetN_ABC_transporter-like"/>
</dbReference>
<dbReference type="InterPro" id="IPR027417">
    <property type="entry name" value="P-loop_NTPase"/>
</dbReference>
<dbReference type="NCBIfam" id="TIGR02315">
    <property type="entry name" value="ABC_phnC"/>
    <property type="match status" value="1"/>
</dbReference>
<dbReference type="PANTHER" id="PTHR43166">
    <property type="entry name" value="AMINO ACID IMPORT ATP-BINDING PROTEIN"/>
    <property type="match status" value="1"/>
</dbReference>
<dbReference type="PANTHER" id="PTHR43166:SF6">
    <property type="entry name" value="PHOSPHONATES IMPORT ATP-BINDING PROTEIN PHNC"/>
    <property type="match status" value="1"/>
</dbReference>
<dbReference type="Pfam" id="PF00005">
    <property type="entry name" value="ABC_tran"/>
    <property type="match status" value="1"/>
</dbReference>
<dbReference type="SMART" id="SM00382">
    <property type="entry name" value="AAA"/>
    <property type="match status" value="1"/>
</dbReference>
<dbReference type="SUPFAM" id="SSF52540">
    <property type="entry name" value="P-loop containing nucleoside triphosphate hydrolases"/>
    <property type="match status" value="1"/>
</dbReference>
<dbReference type="PROSITE" id="PS00211">
    <property type="entry name" value="ABC_TRANSPORTER_1"/>
    <property type="match status" value="1"/>
</dbReference>
<dbReference type="PROSITE" id="PS50893">
    <property type="entry name" value="ABC_TRANSPORTER_2"/>
    <property type="match status" value="1"/>
</dbReference>
<dbReference type="PROSITE" id="PS51249">
    <property type="entry name" value="PHNC"/>
    <property type="match status" value="1"/>
</dbReference>
<protein>
    <recommendedName>
        <fullName evidence="1">Phosphonates import ATP-binding protein PhnC 1</fullName>
        <ecNumber evidence="1">7.3.2.2</ecNumber>
    </recommendedName>
</protein>
<accession>Q6NBX6</accession>
<proteinExistence type="inferred from homology"/>